<keyword id="KW-0460">Magnesium</keyword>
<keyword id="KW-0547">Nucleotide-binding</keyword>
<keyword id="KW-0548">Nucleotidyltransferase</keyword>
<keyword id="KW-0694">RNA-binding</keyword>
<keyword id="KW-0696">RNA-directed RNA polymerase</keyword>
<keyword id="KW-0808">Transferase</keyword>
<keyword id="KW-0693">Viral RNA replication</keyword>
<keyword id="KW-0946">Virion</keyword>
<protein>
    <recommendedName>
        <fullName>RNA-directed RNA polymerase</fullName>
        <ecNumber>2.7.7.48</ecNumber>
    </recommendedName>
    <alternativeName>
        <fullName>Protein VP1</fullName>
    </alternativeName>
</protein>
<sequence>MGKYNLILSEYLSFIYNSQSAVQIPIYYSSNSELESRCIEFHSKCLENSKNGLSLKKLFSEYSDVIENATLLSILSYSYDKYNAVERKLVKYAKSKPLEADLTLNELDYENNKITSELFPTEEEYTDSLMDPAILTSLSSNLNAVMFWLEKHENDTAEKLKIYKRRLDLFSIVASTINKYGVPRHNAKYRYEYDVMKDKPYYLVTWANSSIEMLMSVFSHEDYLIAKELIVLSYSNRSTLAKLVSSPMSILVALVDINGTFITNEELELEFSNKYVRAIVPDQTFDELKQMLDNMRKAGLVDIPKMIQDWLVDCSIERFPLMAKIYSWSFHVGFRKQKMLDAALDQLKTEYTENVDDEMYREYTMLIRDEVVKMLEESVKHDDHLLQDSELAGLLSMSSASNGESRQLKFGRKTIFSTKKNMHVMDDMANGRYTPGIIPPVNADKPIPLGRRDVPGRRTRIIFILPYEYFIAQHAVVEKMLIYAKHTREYAEFYSQSNQLLSYGDVTRFLSNNSMVLYTDVSQWDSSQHNTQPFRKGIIMGLDILANMTNDARVIQTLNLYKQTQINLMDSYVQIPDGNVIKKIQYGAVASGEKQTKAANSIANLALIKTVLSRISNKYSFITKIIRVDGDDNYAVLQFNTEVTKQMVQDVSNDVRETYARMNAKVKALVSTVGIEIAKRYIAGGKIFFRAGINLLNNEKRGQSTQWDQAAVLYSNYIVNRLRGFETDREFILTKIMQMTSVAITGSLRLFPSERVLTTNSTFKVFDSEDFIIEYGTTDDEVYIQRAFMSLSSQKSGIADEISASSTFKNYVSKLSEQLLFSKNNIVSRGIALTEKAKLNSYAPISLEKRRAQISALLTMLQKPVTFKSSKITINDILKDIKPFFTLSEAHLPMQYQKFMPNLPENVQYIIQCIGSRTYQIEDDGSKSAISRLISKYSVYKPSIEELYKVISLHENEIQLYLISLGIPKIDADTYVGSKIYSQDKYRILESYVYNLLSINYGCYQLFDFNSPDLEKLIRIPFKGKIPAVTFILHLYAKLEVINYAIKNGSWISLFCNYPKSEMIKLWKKMWNITSLRSPYTNANFFQD</sequence>
<evidence type="ECO:0000250" key="1"/>
<evidence type="ECO:0000255" key="2">
    <source>
        <dbReference type="PROSITE-ProRule" id="PRU00539"/>
    </source>
</evidence>
<evidence type="ECO:0000305" key="3"/>
<accession>A7J3A6</accession>
<accession>B1NKR7</accession>
<accession>Q9QRZ9</accession>
<reference key="1">
    <citation type="journal article" date="2008" name="J. Virol.">
        <title>Full genome-based classification of rotaviruses reveals a common origin between human Wa-Like and porcine rotavirus strains and human DS-1-like and bovine rotavirus strains.</title>
        <authorList>
            <person name="Matthijnssens J."/>
            <person name="Ciarlet M."/>
            <person name="Heiman E.M."/>
            <person name="Arijs I."/>
            <person name="Delbeke T."/>
            <person name="McDonald S.M."/>
            <person name="Palombo E.A."/>
            <person name="Iturriza-Gomara M."/>
            <person name="Maes P."/>
            <person name="Patton J.T."/>
            <person name="Rahman M."/>
            <person name="Van Ranst M."/>
        </authorList>
    </citation>
    <scope>NUCLEOTIDE SEQUENCE [GENOMIC RNA]</scope>
</reference>
<reference key="2">
    <citation type="journal article" date="1999" name="J. Gen. Virol.">
        <title>Sequence analysis of VP1 and VP7 genes suggests occurrence of a reassortant of G2 rotavirus responsible for an epidemic of gastroenteritis.</title>
        <authorList>
            <person name="Zao C.L."/>
            <person name="Yu W.N."/>
            <person name="Kao C.L."/>
            <person name="Taniguchi K."/>
            <person name="Lee C.Y."/>
            <person name="Lee C.N."/>
        </authorList>
    </citation>
    <scope>NUCLEOTIDE SEQUENCE [GENOMIC RNA] OF 10-150</scope>
</reference>
<comment type="function">
    <text evidence="2">RNA-directed RNA polymerase that is involved in both transcription and genome replication. Together with VP3 capping enzyme, forms an enzyme complex positioned near the channels situated at each of the five-fold vertices of the core. Following infection, the outermost layer of the virus is lost, leaving a double-layered particle (DLP) made up of the core and VP6 shell. VP1 then catalyzes the transcription of fully conservative plus-strand genomic RNAs that are extruded through the DLP's channels into the cytoplasm where they function as mRNAs for translation of viral proteins. One copy of each of the viral (+)RNAs is also recruited during core assembly, together with newly synthesized polymerase complexes and VP2. The polymerase of these novo-formed particles catalyzes the synthesis of complementary minus-strands leading to dsRNA formation. To do so, the polymerase specifically recognizes and binds 4 bases 5'-UGUG-3' in the conserved 3'-sequence of plus-strand RNA templates. VP2 presumably activates the autoinhibited VP1-RNA complex to coordinate packaging and genome replication. Once dsRNA synthesis is complete, the polymerase switches to the transcriptional mode, thus providing secondary transcription (By similarity).</text>
</comment>
<comment type="catalytic activity">
    <reaction evidence="2">
        <text>RNA(n) + a ribonucleoside 5'-triphosphate = RNA(n+1) + diphosphate</text>
        <dbReference type="Rhea" id="RHEA:21248"/>
        <dbReference type="Rhea" id="RHEA-COMP:14527"/>
        <dbReference type="Rhea" id="RHEA-COMP:17342"/>
        <dbReference type="ChEBI" id="CHEBI:33019"/>
        <dbReference type="ChEBI" id="CHEBI:61557"/>
        <dbReference type="ChEBI" id="CHEBI:140395"/>
        <dbReference type="EC" id="2.7.7.48"/>
    </reaction>
</comment>
<comment type="cofactor">
    <cofactor evidence="3">
        <name>Mg(2+)</name>
        <dbReference type="ChEBI" id="CHEBI:18420"/>
    </cofactor>
</comment>
<comment type="subunit">
    <text evidence="1 3">Interacts with VP3 (Potential). Interacts with VP2; this interaction activates VP1. Interacts with NSP5; this interaction is probably necessary for the formation of functional virus factories. Interacts with NSP2; this interaction is weak (By similarity).</text>
</comment>
<comment type="subcellular location">
    <subcellularLocation>
        <location evidence="3">Virion</location>
    </subcellularLocation>
    <text evidence="1">Attached inside the inner capsid as a minor component. Also found in spherical cytoplasmic structures, called virus factories, that appear early after infection and are the site of viral replication and packaging (By similarity).</text>
</comment>
<comment type="similarity">
    <text evidence="3">Belongs to the reoviridae RNA-directed RNA polymerase family.</text>
</comment>
<organismHost>
    <name type="scientific">Homo sapiens</name>
    <name type="common">Human</name>
    <dbReference type="NCBI Taxonomy" id="9606"/>
</organismHost>
<proteinExistence type="inferred from homology"/>
<feature type="chain" id="PRO_0000375231" description="RNA-directed RNA polymerase">
    <location>
        <begin position="1"/>
        <end position="1088"/>
    </location>
</feature>
<feature type="domain" description="RdRp catalytic" evidence="2">
    <location>
        <begin position="501"/>
        <end position="687"/>
    </location>
</feature>
<organism>
    <name type="scientific">Rotavirus A (strain RVA/Human/United States/DS-1/1976/G2P1B[4])</name>
    <name type="common">RV-A</name>
    <name type="synonym">Rotavirus A (strain DS1)</name>
    <dbReference type="NCBI Taxonomy" id="10950"/>
    <lineage>
        <taxon>Viruses</taxon>
        <taxon>Riboviria</taxon>
        <taxon>Orthornavirae</taxon>
        <taxon>Duplornaviricota</taxon>
        <taxon>Resentoviricetes</taxon>
        <taxon>Reovirales</taxon>
        <taxon>Sedoreoviridae</taxon>
        <taxon>Rotavirus</taxon>
        <taxon>Rotavirus A</taxon>
    </lineage>
</organism>
<dbReference type="EC" id="2.7.7.48"/>
<dbReference type="EMBL" id="DQ870505">
    <property type="protein sequence ID" value="ABI58291.1"/>
    <property type="molecule type" value="Genomic_RNA"/>
</dbReference>
<dbReference type="EMBL" id="EF583025">
    <property type="protein sequence ID" value="ABU87834.1"/>
    <property type="molecule type" value="Genomic_RNA"/>
</dbReference>
<dbReference type="EMBL" id="AF106302">
    <property type="protein sequence ID" value="AAD47316.1"/>
    <property type="molecule type" value="Genomic_RNA"/>
</dbReference>
<dbReference type="SMR" id="A7J3A6"/>
<dbReference type="Proteomes" id="UP000001457">
    <property type="component" value="Genome"/>
</dbReference>
<dbReference type="GO" id="GO:0044423">
    <property type="term" value="C:virion component"/>
    <property type="evidence" value="ECO:0007669"/>
    <property type="project" value="UniProtKB-KW"/>
</dbReference>
<dbReference type="GO" id="GO:0000166">
    <property type="term" value="F:nucleotide binding"/>
    <property type="evidence" value="ECO:0007669"/>
    <property type="project" value="UniProtKB-KW"/>
</dbReference>
<dbReference type="GO" id="GO:0003723">
    <property type="term" value="F:RNA binding"/>
    <property type="evidence" value="ECO:0007669"/>
    <property type="project" value="UniProtKB-KW"/>
</dbReference>
<dbReference type="GO" id="GO:0003968">
    <property type="term" value="F:RNA-directed RNA polymerase activity"/>
    <property type="evidence" value="ECO:0007669"/>
    <property type="project" value="UniProtKB-KW"/>
</dbReference>
<dbReference type="GO" id="GO:0006351">
    <property type="term" value="P:DNA-templated transcription"/>
    <property type="evidence" value="ECO:0007669"/>
    <property type="project" value="InterPro"/>
</dbReference>
<dbReference type="GO" id="GO:0019079">
    <property type="term" value="P:viral genome replication"/>
    <property type="evidence" value="ECO:0007669"/>
    <property type="project" value="InterPro"/>
</dbReference>
<dbReference type="Gene3D" id="1.10.357.80">
    <property type="match status" value="2"/>
</dbReference>
<dbReference type="Gene3D" id="1.20.120.1390">
    <property type="match status" value="1"/>
</dbReference>
<dbReference type="Gene3D" id="3.30.230.140">
    <property type="match status" value="2"/>
</dbReference>
<dbReference type="Gene3D" id="3.30.70.2480">
    <property type="match status" value="1"/>
</dbReference>
<dbReference type="Gene3D" id="1.10.10.1990">
    <property type="entry name" value="Viral RNA-directed RNA polymerase, 4-helical domain"/>
    <property type="match status" value="1"/>
</dbReference>
<dbReference type="InterPro" id="IPR043502">
    <property type="entry name" value="DNA/RNA_pol_sf"/>
</dbReference>
<dbReference type="InterPro" id="IPR042032">
    <property type="entry name" value="RNA-dir_pol_4-hel_dom"/>
</dbReference>
<dbReference type="InterPro" id="IPR001795">
    <property type="entry name" value="RNA-dir_pol_luteovirus"/>
</dbReference>
<dbReference type="InterPro" id="IPR007097">
    <property type="entry name" value="RNA-dir_pol_reovirus"/>
</dbReference>
<dbReference type="InterPro" id="IPR022071">
    <property type="entry name" value="Rotavirus_VP1_C"/>
</dbReference>
<dbReference type="Pfam" id="PF02123">
    <property type="entry name" value="RdRP_4"/>
    <property type="match status" value="1"/>
</dbReference>
<dbReference type="Pfam" id="PF12289">
    <property type="entry name" value="Rotavirus_VP1"/>
    <property type="match status" value="1"/>
</dbReference>
<dbReference type="SUPFAM" id="SSF56672">
    <property type="entry name" value="DNA/RNA polymerases"/>
    <property type="match status" value="1"/>
</dbReference>
<dbReference type="PROSITE" id="PS50523">
    <property type="entry name" value="RDRP_DSRNA_REO"/>
    <property type="match status" value="1"/>
</dbReference>
<name>RDRP_ROTHD</name>